<keyword id="KW-0963">Cytoplasm</keyword>
<keyword id="KW-0417">Keratinization</keyword>
<keyword id="KW-1185">Reference proteome</keyword>
<keyword id="KW-0677">Repeat</keyword>
<organism>
    <name type="scientific">Mus musculus</name>
    <name type="common">Mouse</name>
    <dbReference type="NCBI Taxonomy" id="10090"/>
    <lineage>
        <taxon>Eukaryota</taxon>
        <taxon>Metazoa</taxon>
        <taxon>Chordata</taxon>
        <taxon>Craniata</taxon>
        <taxon>Vertebrata</taxon>
        <taxon>Euteleostomi</taxon>
        <taxon>Mammalia</taxon>
        <taxon>Eutheria</taxon>
        <taxon>Euarchontoglires</taxon>
        <taxon>Glires</taxon>
        <taxon>Rodentia</taxon>
        <taxon>Myomorpha</taxon>
        <taxon>Muroidea</taxon>
        <taxon>Muridae</taxon>
        <taxon>Murinae</taxon>
        <taxon>Mus</taxon>
        <taxon>Mus</taxon>
    </lineage>
</organism>
<comment type="function">
    <text evidence="1">Cross-linked envelope protein of keratinocytes. It is a keratinocyte protein that first appears in the cell cytosol, but ultimately becomes cross-linked to membrane proteins by transglutaminase. All that results in the formation of an insoluble envelope beneath the plasma membrane (By similarity).</text>
</comment>
<comment type="subcellular location">
    <subcellularLocation>
        <location evidence="1">Cytoplasm</location>
    </subcellularLocation>
</comment>
<comment type="tissue specificity">
    <text evidence="3">Expressed in uterus.</text>
</comment>
<comment type="developmental stage">
    <text evidence="3">During early pregnancy, uterine expression is markedly increased at 1 dpc and 2 dpc, with levels decreasing from 3 dpc onwards.</text>
</comment>
<comment type="induction">
    <text evidence="3">Up-regulated by estrogen in the uterus of ovariectomized animals, with strongly increased expression detected in luminal epithelial cells at 6 and 12 hours after hormone injection.</text>
</comment>
<comment type="similarity">
    <text evidence="4">Belongs to the cornifin (SPRR) family.</text>
</comment>
<proteinExistence type="evidence at transcript level"/>
<accession>O70556</accession>
<evidence type="ECO:0000250" key="1"/>
<evidence type="ECO:0000256" key="2">
    <source>
        <dbReference type="SAM" id="MobiDB-lite"/>
    </source>
</evidence>
<evidence type="ECO:0000269" key="3">
    <source>
    </source>
</evidence>
<evidence type="ECO:0000305" key="4"/>
<dbReference type="EMBL" id="AJ005563">
    <property type="protein sequence ID" value="CAA06592.1"/>
    <property type="molecule type" value="Genomic_DNA"/>
</dbReference>
<dbReference type="EMBL" id="AY158989">
    <property type="protein sequence ID" value="AAN86826.1"/>
    <property type="molecule type" value="mRNA"/>
</dbReference>
<dbReference type="CCDS" id="CCDS57225.1"/>
<dbReference type="RefSeq" id="NP_035601.1">
    <property type="nucleotide sequence ID" value="NM_011471.3"/>
</dbReference>
<dbReference type="FunCoup" id="O70556">
    <property type="interactions" value="2"/>
</dbReference>
<dbReference type="STRING" id="10090.ENSMUSP00000064652"/>
<dbReference type="PhosphoSitePlus" id="O70556"/>
<dbReference type="PaxDb" id="10090-ENSMUSP00000064652"/>
<dbReference type="ProteomicsDB" id="257326"/>
<dbReference type="DNASU" id="20759"/>
<dbReference type="Ensembl" id="ENSMUST00000068399.2">
    <property type="protein sequence ID" value="ENSMUSP00000064652.2"/>
    <property type="gene ID" value="ENSMUSG00000055030.2"/>
</dbReference>
<dbReference type="GeneID" id="20759"/>
<dbReference type="KEGG" id="mmu:20759"/>
<dbReference type="UCSC" id="uc008qdt.1">
    <property type="organism name" value="mouse"/>
</dbReference>
<dbReference type="AGR" id="MGI:1330346"/>
<dbReference type="CTD" id="6704"/>
<dbReference type="MGI" id="MGI:1330346">
    <property type="gene designation" value="Sprr2e"/>
</dbReference>
<dbReference type="VEuPathDB" id="HostDB:ENSMUSG00000055030"/>
<dbReference type="GeneTree" id="ENSGT01130000278774"/>
<dbReference type="HOGENOM" id="CLU_192372_0_0_1"/>
<dbReference type="InParanoid" id="O70556"/>
<dbReference type="OMA" id="PCKEPCP"/>
<dbReference type="BioGRID-ORCS" id="20759">
    <property type="hits" value="3 hits in 57 CRISPR screens"/>
</dbReference>
<dbReference type="PRO" id="PR:O70556"/>
<dbReference type="Proteomes" id="UP000000589">
    <property type="component" value="Chromosome 3"/>
</dbReference>
<dbReference type="RNAct" id="O70556">
    <property type="molecule type" value="protein"/>
</dbReference>
<dbReference type="Bgee" id="ENSMUSG00000055030">
    <property type="expression patterns" value="Expressed in superior surface of tongue and 39 other cell types or tissues"/>
</dbReference>
<dbReference type="GO" id="GO:0001533">
    <property type="term" value="C:cornified envelope"/>
    <property type="evidence" value="ECO:0000303"/>
    <property type="project" value="UniProtKB"/>
</dbReference>
<dbReference type="GO" id="GO:0005737">
    <property type="term" value="C:cytoplasm"/>
    <property type="evidence" value="ECO:0007669"/>
    <property type="project" value="UniProtKB-SubCell"/>
</dbReference>
<dbReference type="GO" id="GO:0008544">
    <property type="term" value="P:epidermis development"/>
    <property type="evidence" value="ECO:0000303"/>
    <property type="project" value="UniProtKB"/>
</dbReference>
<dbReference type="GO" id="GO:0031424">
    <property type="term" value="P:keratinization"/>
    <property type="evidence" value="ECO:0007669"/>
    <property type="project" value="UniProtKB-KW"/>
</dbReference>
<dbReference type="GO" id="GO:0030216">
    <property type="term" value="P:keratinocyte differentiation"/>
    <property type="evidence" value="ECO:0000303"/>
    <property type="project" value="UniProtKB"/>
</dbReference>
<dbReference type="GO" id="GO:0032355">
    <property type="term" value="P:response to estradiol"/>
    <property type="evidence" value="ECO:0000314"/>
    <property type="project" value="MGI"/>
</dbReference>
<dbReference type="InterPro" id="IPR029142">
    <property type="entry name" value="SPRR2"/>
</dbReference>
<dbReference type="Pfam" id="PF14820">
    <property type="entry name" value="SPRR2"/>
    <property type="match status" value="1"/>
</dbReference>
<dbReference type="PRINTS" id="PR00021">
    <property type="entry name" value="PRORICH"/>
</dbReference>
<gene>
    <name type="primary">Sprr2e</name>
</gene>
<sequence>MSYQQQQCKQPCQPPPVCPPKKCPEPCPHPQCPEPCPPPKCPEPCPEPCPPPSYQQKCPPVQPPPPCQQKCPPKSK</sequence>
<feature type="chain" id="PRO_0000150017" description="Small proline-rich protein 2E">
    <location>
        <begin position="1"/>
        <end position="76"/>
    </location>
</feature>
<feature type="repeat" description="1">
    <location>
        <begin position="21"/>
        <end position="29"/>
    </location>
</feature>
<feature type="repeat" description="2">
    <location>
        <begin position="30"/>
        <end position="38"/>
    </location>
</feature>
<feature type="repeat" description="3">
    <location>
        <begin position="39"/>
        <end position="47"/>
    </location>
</feature>
<feature type="region of interest" description="3 X 9 AA approximate tandem repeats">
    <location>
        <begin position="21"/>
        <end position="47"/>
    </location>
</feature>
<feature type="region of interest" description="Disordered" evidence="2">
    <location>
        <begin position="52"/>
        <end position="76"/>
    </location>
</feature>
<protein>
    <recommendedName>
        <fullName>Small proline-rich protein 2E</fullName>
    </recommendedName>
</protein>
<name>SPR2E_MOUSE</name>
<reference key="1">
    <citation type="journal article" date="1999" name="Genomics">
        <title>Mouse Sprr2 genes: a clustered family of genes showing differential expression in epithelial tissues.</title>
        <authorList>
            <person name="Song H.J."/>
            <person name="Poy G."/>
            <person name="Darwiche N."/>
            <person name="Lichti U."/>
            <person name="Kuroki T."/>
            <person name="Steinert P.M."/>
            <person name="Kartasova T."/>
        </authorList>
    </citation>
    <scope>NUCLEOTIDE SEQUENCE [GENOMIC DNA]</scope>
    <source>
        <strain>129/SvJ</strain>
    </source>
</reference>
<reference key="2">
    <citation type="journal article" date="2003" name="Mamm. Genome">
        <title>Mouse Sprr locus: a tandem array of coordinately regulated genes.</title>
        <authorList>
            <person name="Patel S."/>
            <person name="Kartasova T."/>
            <person name="Segre J.A."/>
        </authorList>
    </citation>
    <scope>NUCLEOTIDE SEQUENCE [MRNA]</scope>
    <source>
        <strain>C57BL/6J</strain>
    </source>
</reference>
<reference key="3">
    <citation type="journal article" date="2004" name="Mol. Cells">
        <title>Estrogen regulates the expression of the small proline-rich 2 gene family in the mouse uterus.</title>
        <authorList>
            <person name="Hong S.H."/>
            <person name="Nah H.Y."/>
            <person name="Lee J.Y."/>
            <person name="Lee Y.J."/>
            <person name="Lee J.W."/>
            <person name="Gye M.C."/>
            <person name="Kim C.H."/>
            <person name="Kang B.M."/>
            <person name="Kim M.K."/>
        </authorList>
    </citation>
    <scope>TISSUE SPECIFICITY</scope>
    <scope>DEVELOPMENTAL STAGE</scope>
    <scope>INDUCTION</scope>
</reference>